<organism>
    <name type="scientific">Sulfurisphaera tokodaii (strain DSM 16993 / JCM 10545 / NBRC 100140 / 7)</name>
    <name type="common">Sulfolobus tokodaii</name>
    <dbReference type="NCBI Taxonomy" id="273063"/>
    <lineage>
        <taxon>Archaea</taxon>
        <taxon>Thermoproteota</taxon>
        <taxon>Thermoprotei</taxon>
        <taxon>Sulfolobales</taxon>
        <taxon>Sulfolobaceae</taxon>
        <taxon>Sulfurisphaera</taxon>
    </lineage>
</organism>
<name>SUA5_SULTO</name>
<accession>Q970S6</accession>
<comment type="function">
    <text evidence="1 5">Required for the formation of a threonylcarbamoyl group on adenosine at position 37 (t(6)A37) in tRNAs that read codons beginning with adenine (By similarity). Probably catalyzes the conversion of L-threonine, HCO(3)(-)/CO(2) and ATP to give threonylcarbamoyl-AMP (TC-AMP) as the acyladenylate intermediate, with the release of diphosphate. Shows ATP hydrolysis activity in vitro, producing AMP.</text>
</comment>
<comment type="catalytic activity">
    <reaction>
        <text>L-threonine + hydrogencarbonate + ATP = L-threonylcarbamoyladenylate + diphosphate + H2O</text>
        <dbReference type="Rhea" id="RHEA:36407"/>
        <dbReference type="ChEBI" id="CHEBI:15377"/>
        <dbReference type="ChEBI" id="CHEBI:17544"/>
        <dbReference type="ChEBI" id="CHEBI:30616"/>
        <dbReference type="ChEBI" id="CHEBI:33019"/>
        <dbReference type="ChEBI" id="CHEBI:57926"/>
        <dbReference type="ChEBI" id="CHEBI:73682"/>
        <dbReference type="EC" id="2.7.7.87"/>
    </reaction>
</comment>
<comment type="subunit">
    <text evidence="3 4 5">Monomer.</text>
</comment>
<comment type="subcellular location">
    <subcellularLocation>
        <location evidence="6">Cytoplasm</location>
    </subcellularLocation>
</comment>
<comment type="similarity">
    <text evidence="6">Belongs to the SUA5 family.</text>
</comment>
<feature type="initiator methionine" description="Removed" evidence="3">
    <location>
        <position position="1"/>
    </location>
</feature>
<feature type="chain" id="PRO_0000423850" description="Threonylcarbamoyl-AMP synthase">
    <location>
        <begin position="2"/>
        <end position="352"/>
    </location>
</feature>
<feature type="domain" description="YrdC-like" evidence="2">
    <location>
        <begin position="14"/>
        <end position="200"/>
    </location>
</feature>
<feature type="binding site" evidence="4">
    <location>
        <position position="36"/>
    </location>
    <ligand>
        <name>L-threonine</name>
        <dbReference type="ChEBI" id="CHEBI:57926"/>
    </ligand>
</feature>
<feature type="binding site">
    <location>
        <position position="59"/>
    </location>
    <ligand>
        <name>ATP</name>
        <dbReference type="ChEBI" id="CHEBI:30616"/>
    </ligand>
</feature>
<feature type="binding site">
    <location>
        <position position="63"/>
    </location>
    <ligand>
        <name>ATP</name>
        <dbReference type="ChEBI" id="CHEBI:30616"/>
    </ligand>
</feature>
<feature type="binding site" evidence="4">
    <location>
        <position position="68"/>
    </location>
    <ligand>
        <name>L-threonine</name>
        <dbReference type="ChEBI" id="CHEBI:57926"/>
    </ligand>
</feature>
<feature type="binding site">
    <location>
        <position position="118"/>
    </location>
    <ligand>
        <name>ATP</name>
        <dbReference type="ChEBI" id="CHEBI:30616"/>
    </ligand>
</feature>
<feature type="binding site" evidence="4">
    <location>
        <position position="122"/>
    </location>
    <ligand>
        <name>L-threonine</name>
        <dbReference type="ChEBI" id="CHEBI:57926"/>
    </ligand>
</feature>
<feature type="binding site" evidence="4">
    <location>
        <position position="142"/>
    </location>
    <ligand>
        <name>L-threonine</name>
        <dbReference type="ChEBI" id="CHEBI:57926"/>
    </ligand>
</feature>
<feature type="binding site">
    <location>
        <position position="144"/>
    </location>
    <ligand>
        <name>ATP</name>
        <dbReference type="ChEBI" id="CHEBI:30616"/>
    </ligand>
</feature>
<feature type="binding site">
    <location>
        <position position="152"/>
    </location>
    <ligand>
        <name>ATP</name>
        <dbReference type="ChEBI" id="CHEBI:30616"/>
    </ligand>
</feature>
<feature type="binding site" evidence="4">
    <location>
        <position position="182"/>
    </location>
    <ligand>
        <name>L-threonine</name>
        <dbReference type="ChEBI" id="CHEBI:57926"/>
    </ligand>
</feature>
<feature type="binding site">
    <location>
        <position position="196"/>
    </location>
    <ligand>
        <name>ATP</name>
        <dbReference type="ChEBI" id="CHEBI:30616"/>
    </ligand>
</feature>
<feature type="binding site">
    <location>
        <position position="237"/>
    </location>
    <ligand>
        <name>ATP</name>
        <dbReference type="ChEBI" id="CHEBI:30616"/>
    </ligand>
</feature>
<feature type="strand" evidence="7">
    <location>
        <begin position="3"/>
        <end position="6"/>
    </location>
</feature>
<feature type="strand" evidence="7">
    <location>
        <begin position="9"/>
        <end position="11"/>
    </location>
</feature>
<feature type="helix" evidence="7">
    <location>
        <begin position="14"/>
        <end position="25"/>
    </location>
</feature>
<feature type="strand" evidence="7">
    <location>
        <begin position="30"/>
        <end position="32"/>
    </location>
</feature>
<feature type="strand" evidence="7">
    <location>
        <begin position="35"/>
        <end position="37"/>
    </location>
</feature>
<feature type="strand" evidence="7">
    <location>
        <begin position="39"/>
        <end position="43"/>
    </location>
</feature>
<feature type="helix" evidence="7">
    <location>
        <begin position="47"/>
        <end position="57"/>
    </location>
</feature>
<feature type="strand" evidence="7">
    <location>
        <begin position="66"/>
        <end position="68"/>
    </location>
</feature>
<feature type="helix" evidence="7">
    <location>
        <begin position="72"/>
        <end position="78"/>
    </location>
</feature>
<feature type="strand" evidence="7">
    <location>
        <begin position="79"/>
        <end position="81"/>
    </location>
</feature>
<feature type="helix" evidence="7">
    <location>
        <begin position="84"/>
        <end position="93"/>
    </location>
</feature>
<feature type="strand" evidence="7">
    <location>
        <begin position="95"/>
        <end position="104"/>
    </location>
</feature>
<feature type="helix" evidence="7">
    <location>
        <begin position="110"/>
        <end position="113"/>
    </location>
</feature>
<feature type="strand" evidence="7">
    <location>
        <begin position="117"/>
        <end position="122"/>
    </location>
</feature>
<feature type="helix" evidence="7">
    <location>
        <begin position="127"/>
        <end position="136"/>
    </location>
</feature>
<feature type="strand" evidence="7">
    <location>
        <begin position="140"/>
        <end position="142"/>
    </location>
</feature>
<feature type="strand" evidence="7">
    <location>
        <begin position="144"/>
        <end position="146"/>
    </location>
</feature>
<feature type="helix" evidence="7">
    <location>
        <begin position="156"/>
        <end position="163"/>
    </location>
</feature>
<feature type="turn" evidence="7">
    <location>
        <begin position="164"/>
        <end position="166"/>
    </location>
</feature>
<feature type="strand" evidence="7">
    <location>
        <begin position="167"/>
        <end position="172"/>
    </location>
</feature>
<feature type="strand" evidence="7">
    <location>
        <begin position="183"/>
        <end position="186"/>
    </location>
</feature>
<feature type="strand" evidence="8">
    <location>
        <begin position="188"/>
        <end position="191"/>
    </location>
</feature>
<feature type="strand" evidence="7">
    <location>
        <begin position="193"/>
        <end position="196"/>
    </location>
</feature>
<feature type="helix" evidence="7">
    <location>
        <begin position="202"/>
        <end position="208"/>
    </location>
</feature>
<feature type="strand" evidence="7">
    <location>
        <begin position="240"/>
        <end position="246"/>
    </location>
</feature>
<feature type="helix" evidence="7">
    <location>
        <begin position="249"/>
        <end position="251"/>
    </location>
</feature>
<feature type="helix" evidence="7">
    <location>
        <begin position="252"/>
        <end position="259"/>
    </location>
</feature>
<feature type="turn" evidence="7">
    <location>
        <begin position="260"/>
        <end position="262"/>
    </location>
</feature>
<feature type="strand" evidence="7">
    <location>
        <begin position="265"/>
        <end position="270"/>
    </location>
</feature>
<feature type="helix" evidence="7">
    <location>
        <begin position="271"/>
        <end position="273"/>
    </location>
</feature>
<feature type="helix" evidence="7">
    <location>
        <begin position="275"/>
        <end position="277"/>
    </location>
</feature>
<feature type="strand" evidence="7">
    <location>
        <begin position="280"/>
        <end position="286"/>
    </location>
</feature>
<feature type="helix" evidence="7">
    <location>
        <begin position="291"/>
        <end position="307"/>
    </location>
</feature>
<feature type="strand" evidence="7">
    <location>
        <begin position="311"/>
        <end position="316"/>
    </location>
</feature>
<feature type="turn" evidence="8">
    <location>
        <begin position="321"/>
        <end position="323"/>
    </location>
</feature>
<feature type="helix" evidence="7">
    <location>
        <begin position="324"/>
        <end position="334"/>
    </location>
</feature>
<feature type="strand" evidence="7">
    <location>
        <begin position="339"/>
        <end position="342"/>
    </location>
</feature>
<feature type="helix" evidence="7">
    <location>
        <begin position="343"/>
        <end position="349"/>
    </location>
</feature>
<protein>
    <recommendedName>
        <fullName>Threonylcarbamoyl-AMP synthase</fullName>
        <shortName>TC-AMP synthase</shortName>
        <ecNumber>2.7.7.87</ecNumber>
    </recommendedName>
    <alternativeName>
        <fullName>L-threonylcarbamoyladenylate synthase</fullName>
    </alternativeName>
    <alternativeName>
        <fullName>t(6)A37 threonylcarbamoyladenosine biosynthesis protein Sua5</fullName>
    </alternativeName>
    <alternativeName>
        <fullName>tRNA threonylcarbamoyladenosine biosynthesis protein Sua5</fullName>
    </alternativeName>
</protein>
<sequence>MTQIIKIDPLNPEIDKIKIAADVIRNGGTVAFPTETVYGLGANAFDGNACLKIFQAKNRPVDNPLIVHIADFNQLFEVAKDIPDKVLEIAQIVWPGPLTFVLKKTERVPKEVTAGLDTVAVRMPAHPIALQLIRESGVPIAAPSANLATRPSPTKAEDVIVDLNGRVDVIIDGGHTFFGVESTIINVTVEPPVLLRPGPFTIEELKKLFGEIVIPEFAQGKKEAEIALAPGMKYKHYAPNTRLLLVENRNIFKDVVSLLSKKYKVALLIPKELSKEFEGLQQIILGSDENLYEVARNLFDSFRELDKLNVDLGIMIGFPERGIGFAIMNRARKASGFSIIKAISDVYKYVNI</sequence>
<keyword id="KW-0002">3D-structure</keyword>
<keyword id="KW-0067">ATP-binding</keyword>
<keyword id="KW-0963">Cytoplasm</keyword>
<keyword id="KW-0903">Direct protein sequencing</keyword>
<keyword id="KW-0547">Nucleotide-binding</keyword>
<keyword id="KW-0548">Nucleotidyltransferase</keyword>
<keyword id="KW-1185">Reference proteome</keyword>
<keyword id="KW-0808">Transferase</keyword>
<keyword id="KW-0819">tRNA processing</keyword>
<proteinExistence type="evidence at protein level"/>
<dbReference type="EC" id="2.7.7.87"/>
<dbReference type="EMBL" id="BA000023">
    <property type="protein sequence ID" value="BAB66597.1"/>
    <property type="molecule type" value="Genomic_DNA"/>
</dbReference>
<dbReference type="RefSeq" id="WP_010979575.1">
    <property type="nucleotide sequence ID" value="NC_003106.2"/>
</dbReference>
<dbReference type="PDB" id="2EQA">
    <property type="method" value="X-ray"/>
    <property type="resolution" value="1.80 A"/>
    <property type="chains" value="A=1-352"/>
</dbReference>
<dbReference type="PDB" id="3AJE">
    <property type="method" value="X-ray"/>
    <property type="resolution" value="1.80 A"/>
    <property type="chains" value="A=1-352"/>
</dbReference>
<dbReference type="PDB" id="4E1B">
    <property type="method" value="X-ray"/>
    <property type="resolution" value="1.80 A"/>
    <property type="chains" value="A=1-352"/>
</dbReference>
<dbReference type="PDBsum" id="2EQA"/>
<dbReference type="PDBsum" id="3AJE"/>
<dbReference type="PDBsum" id="4E1B"/>
<dbReference type="SMR" id="Q970S6"/>
<dbReference type="STRING" id="273063.STK_15260"/>
<dbReference type="GeneID" id="1459561"/>
<dbReference type="KEGG" id="sto:STK_15260"/>
<dbReference type="PATRIC" id="fig|273063.9.peg.1733"/>
<dbReference type="eggNOG" id="arCOG01952">
    <property type="taxonomic scope" value="Archaea"/>
</dbReference>
<dbReference type="OrthoDB" id="39992at2157"/>
<dbReference type="BRENDA" id="2.7.7.87">
    <property type="organism ID" value="15396"/>
</dbReference>
<dbReference type="EvolutionaryTrace" id="Q970S6"/>
<dbReference type="PRO" id="PR:Q970S6"/>
<dbReference type="Proteomes" id="UP000001015">
    <property type="component" value="Chromosome"/>
</dbReference>
<dbReference type="GO" id="GO:0005737">
    <property type="term" value="C:cytoplasm"/>
    <property type="evidence" value="ECO:0007669"/>
    <property type="project" value="UniProtKB-SubCell"/>
</dbReference>
<dbReference type="GO" id="GO:0005524">
    <property type="term" value="F:ATP binding"/>
    <property type="evidence" value="ECO:0000314"/>
    <property type="project" value="UniProtKB"/>
</dbReference>
<dbReference type="GO" id="GO:0003725">
    <property type="term" value="F:double-stranded RNA binding"/>
    <property type="evidence" value="ECO:0007669"/>
    <property type="project" value="InterPro"/>
</dbReference>
<dbReference type="GO" id="GO:0061710">
    <property type="term" value="F:L-threonylcarbamoyladenylate synthase"/>
    <property type="evidence" value="ECO:0007669"/>
    <property type="project" value="UniProtKB-EC"/>
</dbReference>
<dbReference type="GO" id="GO:0000049">
    <property type="term" value="F:tRNA binding"/>
    <property type="evidence" value="ECO:0007669"/>
    <property type="project" value="TreeGrafter"/>
</dbReference>
<dbReference type="GO" id="GO:0006450">
    <property type="term" value="P:regulation of translational fidelity"/>
    <property type="evidence" value="ECO:0007669"/>
    <property type="project" value="TreeGrafter"/>
</dbReference>
<dbReference type="GO" id="GO:0008033">
    <property type="term" value="P:tRNA processing"/>
    <property type="evidence" value="ECO:0007669"/>
    <property type="project" value="UniProtKB-KW"/>
</dbReference>
<dbReference type="FunFam" id="3.40.50.11030:FF:000001">
    <property type="entry name" value="Threonylcarbamoyl-AMP synthase"/>
    <property type="match status" value="1"/>
</dbReference>
<dbReference type="FunFam" id="3.90.870.10:FF:000008">
    <property type="entry name" value="Threonylcarbamoyl-AMP synthase"/>
    <property type="match status" value="1"/>
</dbReference>
<dbReference type="Gene3D" id="3.90.870.10">
    <property type="entry name" value="DHBP synthase"/>
    <property type="match status" value="1"/>
</dbReference>
<dbReference type="Gene3D" id="3.40.50.11030">
    <property type="entry name" value="Threonylcarbamoyl-AMP synthase, C-terminal domain"/>
    <property type="match status" value="1"/>
</dbReference>
<dbReference type="InterPro" id="IPR017945">
    <property type="entry name" value="DHBP_synth_RibB-like_a/b_dom"/>
</dbReference>
<dbReference type="InterPro" id="IPR006070">
    <property type="entry name" value="Sua5-like_dom"/>
</dbReference>
<dbReference type="InterPro" id="IPR038385">
    <property type="entry name" value="Sua5/YwlC_C"/>
</dbReference>
<dbReference type="InterPro" id="IPR005145">
    <property type="entry name" value="Sua5_C"/>
</dbReference>
<dbReference type="InterPro" id="IPR010923">
    <property type="entry name" value="T(6)A37_SUA5"/>
</dbReference>
<dbReference type="InterPro" id="IPR050156">
    <property type="entry name" value="TC-AMP_synthase_SUA5"/>
</dbReference>
<dbReference type="NCBIfam" id="TIGR00057">
    <property type="entry name" value="L-threonylcarbamoyladenylate synthase"/>
    <property type="match status" value="1"/>
</dbReference>
<dbReference type="PANTHER" id="PTHR17490">
    <property type="entry name" value="SUA5"/>
    <property type="match status" value="1"/>
</dbReference>
<dbReference type="PANTHER" id="PTHR17490:SF16">
    <property type="entry name" value="THREONYLCARBAMOYL-AMP SYNTHASE"/>
    <property type="match status" value="1"/>
</dbReference>
<dbReference type="Pfam" id="PF03481">
    <property type="entry name" value="Sua5_C"/>
    <property type="match status" value="1"/>
</dbReference>
<dbReference type="Pfam" id="PF01300">
    <property type="entry name" value="Sua5_yciO_yrdC"/>
    <property type="match status" value="1"/>
</dbReference>
<dbReference type="PIRSF" id="PIRSF004930">
    <property type="entry name" value="Tln_factor_SUA5"/>
    <property type="match status" value="1"/>
</dbReference>
<dbReference type="SUPFAM" id="SSF55821">
    <property type="entry name" value="YrdC/RibB"/>
    <property type="match status" value="1"/>
</dbReference>
<dbReference type="PROSITE" id="PS51163">
    <property type="entry name" value="YRDC"/>
    <property type="match status" value="1"/>
</dbReference>
<gene>
    <name type="primary">sua5</name>
    <name type="ordered locus">STK_15260</name>
</gene>
<reference key="1">
    <citation type="journal article" date="2001" name="DNA Res.">
        <title>Complete genome sequence of an aerobic thermoacidophilic Crenarchaeon, Sulfolobus tokodaii strain7.</title>
        <authorList>
            <person name="Kawarabayasi Y."/>
            <person name="Hino Y."/>
            <person name="Horikawa H."/>
            <person name="Jin-no K."/>
            <person name="Takahashi M."/>
            <person name="Sekine M."/>
            <person name="Baba S."/>
            <person name="Ankai A."/>
            <person name="Kosugi H."/>
            <person name="Hosoyama A."/>
            <person name="Fukui S."/>
            <person name="Nagai Y."/>
            <person name="Nishijima K."/>
            <person name="Otsuka R."/>
            <person name="Nakazawa H."/>
            <person name="Takamiya M."/>
            <person name="Kato Y."/>
            <person name="Yoshizawa T."/>
            <person name="Tanaka T."/>
            <person name="Kudoh Y."/>
            <person name="Yamazaki J."/>
            <person name="Kushida N."/>
            <person name="Oguchi A."/>
            <person name="Aoki K."/>
            <person name="Masuda S."/>
            <person name="Yanagii M."/>
            <person name="Nishimura M."/>
            <person name="Yamagishi A."/>
            <person name="Oshima T."/>
            <person name="Kikuchi H."/>
        </authorList>
    </citation>
    <scope>NUCLEOTIDE SEQUENCE [LARGE SCALE GENOMIC DNA]</scope>
    <source>
        <strain>DSM 16993 / JCM 10545 / NBRC 100140 / 7</strain>
    </source>
</reference>
<reference key="2">
    <citation type="journal article" date="2008" name="Proteins">
        <title>X-ray crystal structure of a hypothetical Sua5 protein from Sulfolobus tokodaii strain 7.</title>
        <authorList>
            <person name="Agari Y."/>
            <person name="Sato S."/>
            <person name="Wakamatsu T."/>
            <person name="Bessho Y."/>
            <person name="Ebihara A."/>
            <person name="Yokoyama S."/>
            <person name="Kuramitsu S."/>
            <person name="Shinkai A."/>
        </authorList>
    </citation>
    <scope>PROTEIN SEQUENCE OF 2-6</scope>
    <scope>X-RAY CRYSTALLOGRAPHY (1.80 ANGSTROMS) IN COMPLEX WITH AMP</scope>
    <scope>ATPASE ACTIVITY</scope>
    <scope>SUBUNIT</scope>
    <source>
        <strain>DSM 16993 / JCM 10545 / NBRC 100140 / 7</strain>
    </source>
</reference>
<reference key="3">
    <citation type="journal article" date="2011" name="Proteins">
        <title>Crystal structure of Sulfolobus tokodaii Sua5 complexed with L-threonine and AMPPNP.</title>
        <authorList>
            <person name="Kuratani M."/>
            <person name="Kasai T."/>
            <person name="Akasaka R."/>
            <person name="Higashijima K."/>
            <person name="Terada T."/>
            <person name="Kigawa T."/>
            <person name="Shinkai A."/>
            <person name="Bessho Y."/>
            <person name="Yokoyama S."/>
        </authorList>
    </citation>
    <scope>X-RAY CRYSTALLOGRAPHY (1.80 ANGSTROMS) IN COMPLEX WITH L-THREONINE AND AN ATP ANALOG</scope>
    <scope>THREONINE-BINDING</scope>
    <scope>ATP-BINDING</scope>
    <scope>SUBUNIT</scope>
    <source>
        <strain>DSM 16993 / JCM 10545 / NBRC 100140 / 7</strain>
    </source>
</reference>
<reference key="4">
    <citation type="journal article" date="2012" name="Angew. Chem. Int. Ed.">
        <title>The O-carbamoyltransferase TobZ catalyzes an ancient enzymatic reaction.</title>
        <authorList>
            <person name="Parthier C."/>
            <person name="Gorlich S."/>
            <person name="Jaenecke F."/>
            <person name="Breithaupt C."/>
            <person name="Brauer U."/>
            <person name="Fandrich U."/>
            <person name="Clausnitzer D."/>
            <person name="Wehmeier U.F."/>
            <person name="Bottcher C."/>
            <person name="Scheel D."/>
            <person name="Stubbs M.T."/>
        </authorList>
    </citation>
    <scope>X-RAY CRYSTALLOGRAPHY (1.80 ANGSTROMS) IN COMPLEX WITH THREONYLCARBAMOYLADENYLATE</scope>
    <scope>FUNCTION</scope>
</reference>
<evidence type="ECO:0000250" key="1"/>
<evidence type="ECO:0000255" key="2">
    <source>
        <dbReference type="PROSITE-ProRule" id="PRU00518"/>
    </source>
</evidence>
<evidence type="ECO:0000269" key="3">
    <source>
    </source>
</evidence>
<evidence type="ECO:0000269" key="4">
    <source>
    </source>
</evidence>
<evidence type="ECO:0000269" key="5">
    <source>
    </source>
</evidence>
<evidence type="ECO:0000305" key="6"/>
<evidence type="ECO:0007829" key="7">
    <source>
        <dbReference type="PDB" id="2EQA"/>
    </source>
</evidence>
<evidence type="ECO:0007829" key="8">
    <source>
        <dbReference type="PDB" id="3AJE"/>
    </source>
</evidence>